<organism>
    <name type="scientific">Clostridium novyi (strain NT)</name>
    <dbReference type="NCBI Taxonomy" id="386415"/>
    <lineage>
        <taxon>Bacteria</taxon>
        <taxon>Bacillati</taxon>
        <taxon>Bacillota</taxon>
        <taxon>Clostridia</taxon>
        <taxon>Eubacteriales</taxon>
        <taxon>Clostridiaceae</taxon>
        <taxon>Clostridium</taxon>
    </lineage>
</organism>
<protein>
    <recommendedName>
        <fullName evidence="2">Elongation factor Tu</fullName>
        <shortName evidence="2">EF-Tu</shortName>
        <ecNumber evidence="2">3.6.5.3</ecNumber>
    </recommendedName>
</protein>
<name>EFTU_CLONN</name>
<proteinExistence type="inferred from homology"/>
<dbReference type="EC" id="3.6.5.3" evidence="2"/>
<dbReference type="EMBL" id="CP000382">
    <property type="protein sequence ID" value="ABK60568.1"/>
    <property type="molecule type" value="Genomic_DNA"/>
</dbReference>
<dbReference type="EMBL" id="CP000382">
    <property type="protein sequence ID" value="ABK62174.1"/>
    <property type="molecule type" value="Genomic_DNA"/>
</dbReference>
<dbReference type="SMR" id="A0PXT1"/>
<dbReference type="STRING" id="386415.NT01CX_1100"/>
<dbReference type="KEGG" id="cno:NT01CX_1100"/>
<dbReference type="KEGG" id="cno:NT01CX_1113"/>
<dbReference type="PATRIC" id="fig|386415.7.peg.209"/>
<dbReference type="eggNOG" id="COG0050">
    <property type="taxonomic scope" value="Bacteria"/>
</dbReference>
<dbReference type="HOGENOM" id="CLU_007265_0_1_9"/>
<dbReference type="Proteomes" id="UP000008220">
    <property type="component" value="Chromosome"/>
</dbReference>
<dbReference type="GO" id="GO:0005829">
    <property type="term" value="C:cytosol"/>
    <property type="evidence" value="ECO:0007669"/>
    <property type="project" value="TreeGrafter"/>
</dbReference>
<dbReference type="GO" id="GO:0005525">
    <property type="term" value="F:GTP binding"/>
    <property type="evidence" value="ECO:0007669"/>
    <property type="project" value="UniProtKB-UniRule"/>
</dbReference>
<dbReference type="GO" id="GO:0003924">
    <property type="term" value="F:GTPase activity"/>
    <property type="evidence" value="ECO:0007669"/>
    <property type="project" value="InterPro"/>
</dbReference>
<dbReference type="GO" id="GO:0003746">
    <property type="term" value="F:translation elongation factor activity"/>
    <property type="evidence" value="ECO:0007669"/>
    <property type="project" value="UniProtKB-UniRule"/>
</dbReference>
<dbReference type="CDD" id="cd01884">
    <property type="entry name" value="EF_Tu"/>
    <property type="match status" value="1"/>
</dbReference>
<dbReference type="CDD" id="cd03697">
    <property type="entry name" value="EFTU_II"/>
    <property type="match status" value="1"/>
</dbReference>
<dbReference type="CDD" id="cd03707">
    <property type="entry name" value="EFTU_III"/>
    <property type="match status" value="1"/>
</dbReference>
<dbReference type="FunFam" id="2.40.30.10:FF:000001">
    <property type="entry name" value="Elongation factor Tu"/>
    <property type="match status" value="1"/>
</dbReference>
<dbReference type="FunFam" id="3.40.50.300:FF:000003">
    <property type="entry name" value="Elongation factor Tu"/>
    <property type="match status" value="1"/>
</dbReference>
<dbReference type="Gene3D" id="3.40.50.300">
    <property type="entry name" value="P-loop containing nucleotide triphosphate hydrolases"/>
    <property type="match status" value="1"/>
</dbReference>
<dbReference type="Gene3D" id="2.40.30.10">
    <property type="entry name" value="Translation factors"/>
    <property type="match status" value="2"/>
</dbReference>
<dbReference type="HAMAP" id="MF_00118_B">
    <property type="entry name" value="EF_Tu_B"/>
    <property type="match status" value="1"/>
</dbReference>
<dbReference type="InterPro" id="IPR041709">
    <property type="entry name" value="EF-Tu_GTP-bd"/>
</dbReference>
<dbReference type="InterPro" id="IPR050055">
    <property type="entry name" value="EF-Tu_GTPase"/>
</dbReference>
<dbReference type="InterPro" id="IPR004161">
    <property type="entry name" value="EFTu-like_2"/>
</dbReference>
<dbReference type="InterPro" id="IPR033720">
    <property type="entry name" value="EFTU_2"/>
</dbReference>
<dbReference type="InterPro" id="IPR031157">
    <property type="entry name" value="G_TR_CS"/>
</dbReference>
<dbReference type="InterPro" id="IPR027417">
    <property type="entry name" value="P-loop_NTPase"/>
</dbReference>
<dbReference type="InterPro" id="IPR005225">
    <property type="entry name" value="Small_GTP-bd"/>
</dbReference>
<dbReference type="InterPro" id="IPR000795">
    <property type="entry name" value="T_Tr_GTP-bd_dom"/>
</dbReference>
<dbReference type="InterPro" id="IPR009000">
    <property type="entry name" value="Transl_B-barrel_sf"/>
</dbReference>
<dbReference type="InterPro" id="IPR009001">
    <property type="entry name" value="Transl_elong_EF1A/Init_IF2_C"/>
</dbReference>
<dbReference type="InterPro" id="IPR004541">
    <property type="entry name" value="Transl_elong_EFTu/EF1A_bac/org"/>
</dbReference>
<dbReference type="InterPro" id="IPR004160">
    <property type="entry name" value="Transl_elong_EFTu/EF1A_C"/>
</dbReference>
<dbReference type="NCBIfam" id="TIGR00485">
    <property type="entry name" value="EF-Tu"/>
    <property type="match status" value="1"/>
</dbReference>
<dbReference type="NCBIfam" id="NF000766">
    <property type="entry name" value="PRK00049.1"/>
    <property type="match status" value="1"/>
</dbReference>
<dbReference type="NCBIfam" id="NF009372">
    <property type="entry name" value="PRK12735.1"/>
    <property type="match status" value="1"/>
</dbReference>
<dbReference type="NCBIfam" id="NF009373">
    <property type="entry name" value="PRK12736.1"/>
    <property type="match status" value="1"/>
</dbReference>
<dbReference type="NCBIfam" id="TIGR00231">
    <property type="entry name" value="small_GTP"/>
    <property type="match status" value="1"/>
</dbReference>
<dbReference type="PANTHER" id="PTHR43721:SF22">
    <property type="entry name" value="ELONGATION FACTOR TU, MITOCHONDRIAL"/>
    <property type="match status" value="1"/>
</dbReference>
<dbReference type="PANTHER" id="PTHR43721">
    <property type="entry name" value="ELONGATION FACTOR TU-RELATED"/>
    <property type="match status" value="1"/>
</dbReference>
<dbReference type="Pfam" id="PF00009">
    <property type="entry name" value="GTP_EFTU"/>
    <property type="match status" value="1"/>
</dbReference>
<dbReference type="Pfam" id="PF03144">
    <property type="entry name" value="GTP_EFTU_D2"/>
    <property type="match status" value="1"/>
</dbReference>
<dbReference type="Pfam" id="PF03143">
    <property type="entry name" value="GTP_EFTU_D3"/>
    <property type="match status" value="1"/>
</dbReference>
<dbReference type="PRINTS" id="PR00315">
    <property type="entry name" value="ELONGATNFCT"/>
</dbReference>
<dbReference type="SUPFAM" id="SSF50465">
    <property type="entry name" value="EF-Tu/eEF-1alpha/eIF2-gamma C-terminal domain"/>
    <property type="match status" value="1"/>
</dbReference>
<dbReference type="SUPFAM" id="SSF52540">
    <property type="entry name" value="P-loop containing nucleoside triphosphate hydrolases"/>
    <property type="match status" value="1"/>
</dbReference>
<dbReference type="SUPFAM" id="SSF50447">
    <property type="entry name" value="Translation proteins"/>
    <property type="match status" value="1"/>
</dbReference>
<dbReference type="PROSITE" id="PS00301">
    <property type="entry name" value="G_TR_1"/>
    <property type="match status" value="1"/>
</dbReference>
<dbReference type="PROSITE" id="PS51722">
    <property type="entry name" value="G_TR_2"/>
    <property type="match status" value="1"/>
</dbReference>
<gene>
    <name evidence="2" type="primary">tuf1</name>
    <name type="ordered locus">NT01CX_1100</name>
</gene>
<gene>
    <name evidence="2" type="primary">tuf2</name>
    <name type="ordered locus">NT01CX_1113</name>
</gene>
<sequence>MARQKFERNKPHVNIGTIGHVDHGKTTTTAAITMTLAKAGGAEVQNYEDIDKAPEEKERGITINTSHVEYETENRHYAHVDCPGHADYVKNMITGAAQMDGAILVVSAADGPMPQTREHILLASRVGVNHIVVFLNKADQVDDPELLELVEMEVRELLSEYGFDGDECPVVVGSALKAIEEGDDQCILDLMKAVDEYIPTPERATDQPFLMPVEDVFTITGRGTVATGRVERGVLHVGDEVQIVGMKEEIGKTTITGVEMFRKMLDEAMAGDNIGALLRGVQRDEIERGQVLAKPGSVTPHKKFVGQVYVLKKEEGGRHTPFFNGYRPQFYFRTTDVTGSIALPEGVEMVMPGDHIDMNVELITPVAMENNLRFAIREGGRTVGSGVVTSIVE</sequence>
<comment type="function">
    <text evidence="2">GTP hydrolase that promotes the GTP-dependent binding of aminoacyl-tRNA to the A-site of ribosomes during protein biosynthesis.</text>
</comment>
<comment type="catalytic activity">
    <reaction evidence="2">
        <text>GTP + H2O = GDP + phosphate + H(+)</text>
        <dbReference type="Rhea" id="RHEA:19669"/>
        <dbReference type="ChEBI" id="CHEBI:15377"/>
        <dbReference type="ChEBI" id="CHEBI:15378"/>
        <dbReference type="ChEBI" id="CHEBI:37565"/>
        <dbReference type="ChEBI" id="CHEBI:43474"/>
        <dbReference type="ChEBI" id="CHEBI:58189"/>
        <dbReference type="EC" id="3.6.5.3"/>
    </reaction>
    <physiologicalReaction direction="left-to-right" evidence="2">
        <dbReference type="Rhea" id="RHEA:19670"/>
    </physiologicalReaction>
</comment>
<comment type="subunit">
    <text evidence="2">Monomer.</text>
</comment>
<comment type="subcellular location">
    <subcellularLocation>
        <location evidence="2">Cytoplasm</location>
    </subcellularLocation>
</comment>
<comment type="similarity">
    <text evidence="2">Belongs to the TRAFAC class translation factor GTPase superfamily. Classic translation factor GTPase family. EF-Tu/EF-1A subfamily.</text>
</comment>
<evidence type="ECO:0000250" key="1"/>
<evidence type="ECO:0000255" key="2">
    <source>
        <dbReference type="HAMAP-Rule" id="MF_00118"/>
    </source>
</evidence>
<accession>A0PXT1</accession>
<feature type="chain" id="PRO_0000337363" description="Elongation factor Tu">
    <location>
        <begin position="1"/>
        <end position="393"/>
    </location>
</feature>
<feature type="domain" description="tr-type G">
    <location>
        <begin position="10"/>
        <end position="202"/>
    </location>
</feature>
<feature type="region of interest" description="G1" evidence="1">
    <location>
        <begin position="19"/>
        <end position="26"/>
    </location>
</feature>
<feature type="region of interest" description="G2" evidence="1">
    <location>
        <begin position="60"/>
        <end position="64"/>
    </location>
</feature>
<feature type="region of interest" description="G3" evidence="1">
    <location>
        <begin position="81"/>
        <end position="84"/>
    </location>
</feature>
<feature type="region of interest" description="G4" evidence="1">
    <location>
        <begin position="136"/>
        <end position="139"/>
    </location>
</feature>
<feature type="region of interest" description="G5" evidence="1">
    <location>
        <begin position="174"/>
        <end position="176"/>
    </location>
</feature>
<feature type="binding site" evidence="2">
    <location>
        <begin position="19"/>
        <end position="26"/>
    </location>
    <ligand>
        <name>GTP</name>
        <dbReference type="ChEBI" id="CHEBI:37565"/>
    </ligand>
</feature>
<feature type="binding site" evidence="2">
    <location>
        <position position="26"/>
    </location>
    <ligand>
        <name>Mg(2+)</name>
        <dbReference type="ChEBI" id="CHEBI:18420"/>
    </ligand>
</feature>
<feature type="binding site" evidence="2">
    <location>
        <begin position="81"/>
        <end position="85"/>
    </location>
    <ligand>
        <name>GTP</name>
        <dbReference type="ChEBI" id="CHEBI:37565"/>
    </ligand>
</feature>
<feature type="binding site" evidence="2">
    <location>
        <begin position="136"/>
        <end position="139"/>
    </location>
    <ligand>
        <name>GTP</name>
        <dbReference type="ChEBI" id="CHEBI:37565"/>
    </ligand>
</feature>
<keyword id="KW-0963">Cytoplasm</keyword>
<keyword id="KW-0251">Elongation factor</keyword>
<keyword id="KW-0342">GTP-binding</keyword>
<keyword id="KW-0378">Hydrolase</keyword>
<keyword id="KW-0460">Magnesium</keyword>
<keyword id="KW-0479">Metal-binding</keyword>
<keyword id="KW-0547">Nucleotide-binding</keyword>
<keyword id="KW-0648">Protein biosynthesis</keyword>
<keyword id="KW-1185">Reference proteome</keyword>
<reference key="1">
    <citation type="journal article" date="2006" name="Nat. Biotechnol.">
        <title>The genome and transcriptomes of the anti-tumor agent Clostridium novyi-NT.</title>
        <authorList>
            <person name="Bettegowda C."/>
            <person name="Huang X."/>
            <person name="Lin J."/>
            <person name="Cheong I."/>
            <person name="Kohli M."/>
            <person name="Szabo S.A."/>
            <person name="Zhang X."/>
            <person name="Diaz L.A. Jr."/>
            <person name="Velculescu V.E."/>
            <person name="Parmigiani G."/>
            <person name="Kinzler K.W."/>
            <person name="Vogelstein B."/>
            <person name="Zhou S."/>
        </authorList>
    </citation>
    <scope>NUCLEOTIDE SEQUENCE [LARGE SCALE GENOMIC DNA]</scope>
    <source>
        <strain>NT</strain>
    </source>
</reference>